<keyword id="KW-0009">Actin-binding</keyword>
<keyword id="KW-0106">Calcium</keyword>
<keyword id="KW-1003">Cell membrane</keyword>
<keyword id="KW-0175">Coiled coil</keyword>
<keyword id="KW-0963">Cytoplasm</keyword>
<keyword id="KW-0206">Cytoskeleton</keyword>
<keyword id="KW-0254">Endocytosis</keyword>
<keyword id="KW-0967">Endosome</keyword>
<keyword id="KW-0472">Membrane</keyword>
<keyword id="KW-0479">Metal-binding</keyword>
<keyword id="KW-1185">Reference proteome</keyword>
<keyword id="KW-0677">Repeat</keyword>
<reference key="1">
    <citation type="journal article" date="2004" name="Nature">
        <title>Genome evolution in yeasts.</title>
        <authorList>
            <person name="Dujon B."/>
            <person name="Sherman D."/>
            <person name="Fischer G."/>
            <person name="Durrens P."/>
            <person name="Casaregola S."/>
            <person name="Lafontaine I."/>
            <person name="de Montigny J."/>
            <person name="Marck C."/>
            <person name="Neuveglise C."/>
            <person name="Talla E."/>
            <person name="Goffard N."/>
            <person name="Frangeul L."/>
            <person name="Aigle M."/>
            <person name="Anthouard V."/>
            <person name="Babour A."/>
            <person name="Barbe V."/>
            <person name="Barnay S."/>
            <person name="Blanchin S."/>
            <person name="Beckerich J.-M."/>
            <person name="Beyne E."/>
            <person name="Bleykasten C."/>
            <person name="Boisrame A."/>
            <person name="Boyer J."/>
            <person name="Cattolico L."/>
            <person name="Confanioleri F."/>
            <person name="de Daruvar A."/>
            <person name="Despons L."/>
            <person name="Fabre E."/>
            <person name="Fairhead C."/>
            <person name="Ferry-Dumazet H."/>
            <person name="Groppi A."/>
            <person name="Hantraye F."/>
            <person name="Hennequin C."/>
            <person name="Jauniaux N."/>
            <person name="Joyet P."/>
            <person name="Kachouri R."/>
            <person name="Kerrest A."/>
            <person name="Koszul R."/>
            <person name="Lemaire M."/>
            <person name="Lesur I."/>
            <person name="Ma L."/>
            <person name="Muller H."/>
            <person name="Nicaud J.-M."/>
            <person name="Nikolski M."/>
            <person name="Oztas S."/>
            <person name="Ozier-Kalogeropoulos O."/>
            <person name="Pellenz S."/>
            <person name="Potier S."/>
            <person name="Richard G.-F."/>
            <person name="Straub M.-L."/>
            <person name="Suleau A."/>
            <person name="Swennen D."/>
            <person name="Tekaia F."/>
            <person name="Wesolowski-Louvel M."/>
            <person name="Westhof E."/>
            <person name="Wirth B."/>
            <person name="Zeniou-Meyer M."/>
            <person name="Zivanovic Y."/>
            <person name="Bolotin-Fukuhara M."/>
            <person name="Thierry A."/>
            <person name="Bouchier C."/>
            <person name="Caudron B."/>
            <person name="Scarpelli C."/>
            <person name="Gaillardin C."/>
            <person name="Weissenbach J."/>
            <person name="Wincker P."/>
            <person name="Souciet J.-L."/>
        </authorList>
    </citation>
    <scope>NUCLEOTIDE SEQUENCE [LARGE SCALE GENOMIC DNA]</scope>
    <source>
        <strain>ATCC 8585 / CBS 2359 / DSM 70799 / NBRC 1267 / NRRL Y-1140 / WM37</strain>
    </source>
</reference>
<accession>Q6CQX9</accession>
<proteinExistence type="inferred from homology"/>
<organism>
    <name type="scientific">Kluyveromyces lactis (strain ATCC 8585 / CBS 2359 / DSM 70799 / NBRC 1267 / NRRL Y-1140 / WM37)</name>
    <name type="common">Yeast</name>
    <name type="synonym">Candida sphaerica</name>
    <dbReference type="NCBI Taxonomy" id="284590"/>
    <lineage>
        <taxon>Eukaryota</taxon>
        <taxon>Fungi</taxon>
        <taxon>Dikarya</taxon>
        <taxon>Ascomycota</taxon>
        <taxon>Saccharomycotina</taxon>
        <taxon>Saccharomycetes</taxon>
        <taxon>Saccharomycetales</taxon>
        <taxon>Saccharomycetaceae</taxon>
        <taxon>Kluyveromyces</taxon>
    </lineage>
</organism>
<protein>
    <recommendedName>
        <fullName>Actin cytoskeleton-regulatory complex protein PAN1</fullName>
    </recommendedName>
</protein>
<gene>
    <name type="primary">PAN1</name>
    <name type="ordered locus">KLLA0D13398g</name>
</gene>
<feature type="chain" id="PRO_0000349477" description="Actin cytoskeleton-regulatory complex protein PAN1">
    <location>
        <begin position="1"/>
        <end position="1324"/>
    </location>
</feature>
<feature type="domain" description="EH 1" evidence="3">
    <location>
        <begin position="199"/>
        <end position="288"/>
    </location>
</feature>
<feature type="domain" description="EF-hand 1" evidence="4">
    <location>
        <begin position="232"/>
        <end position="267"/>
    </location>
</feature>
<feature type="domain" description="EH 2" evidence="3">
    <location>
        <begin position="494"/>
        <end position="583"/>
    </location>
</feature>
<feature type="domain" description="EF-hand 2" evidence="4">
    <location>
        <begin position="527"/>
        <end position="562"/>
    </location>
</feature>
<feature type="region of interest" description="Disordered" evidence="5">
    <location>
        <begin position="1"/>
        <end position="98"/>
    </location>
</feature>
<feature type="region of interest" description="Disordered" evidence="5">
    <location>
        <begin position="299"/>
        <end position="427"/>
    </location>
</feature>
<feature type="region of interest" description="Disordered" evidence="5">
    <location>
        <begin position="593"/>
        <end position="634"/>
    </location>
</feature>
<feature type="region of interest" description="Disordered" evidence="5">
    <location>
        <begin position="891"/>
        <end position="923"/>
    </location>
</feature>
<feature type="region of interest" description="Disordered" evidence="5">
    <location>
        <begin position="935"/>
        <end position="1175"/>
    </location>
</feature>
<feature type="region of interest" description="Disordered" evidence="5">
    <location>
        <begin position="1201"/>
        <end position="1240"/>
    </location>
</feature>
<feature type="region of interest" description="Disordered" evidence="5">
    <location>
        <begin position="1259"/>
        <end position="1324"/>
    </location>
</feature>
<feature type="coiled-coil region" evidence="2">
    <location>
        <begin position="622"/>
        <end position="690"/>
    </location>
</feature>
<feature type="coiled-coil region" evidence="2">
    <location>
        <begin position="999"/>
        <end position="1036"/>
    </location>
</feature>
<feature type="compositionally biased region" description="Low complexity" evidence="5">
    <location>
        <begin position="1"/>
        <end position="26"/>
    </location>
</feature>
<feature type="compositionally biased region" description="Low complexity" evidence="5">
    <location>
        <begin position="35"/>
        <end position="54"/>
    </location>
</feature>
<feature type="compositionally biased region" description="Polar residues" evidence="5">
    <location>
        <begin position="55"/>
        <end position="67"/>
    </location>
</feature>
<feature type="compositionally biased region" description="Low complexity" evidence="5">
    <location>
        <begin position="68"/>
        <end position="98"/>
    </location>
</feature>
<feature type="compositionally biased region" description="Low complexity" evidence="5">
    <location>
        <begin position="330"/>
        <end position="364"/>
    </location>
</feature>
<feature type="compositionally biased region" description="Polar residues" evidence="5">
    <location>
        <begin position="371"/>
        <end position="411"/>
    </location>
</feature>
<feature type="compositionally biased region" description="Basic and acidic residues" evidence="5">
    <location>
        <begin position="593"/>
        <end position="614"/>
    </location>
</feature>
<feature type="compositionally biased region" description="Basic and acidic residues" evidence="5">
    <location>
        <begin position="911"/>
        <end position="923"/>
    </location>
</feature>
<feature type="compositionally biased region" description="Low complexity" evidence="5">
    <location>
        <begin position="941"/>
        <end position="984"/>
    </location>
</feature>
<feature type="compositionally biased region" description="Acidic residues" evidence="5">
    <location>
        <begin position="998"/>
        <end position="1008"/>
    </location>
</feature>
<feature type="compositionally biased region" description="Basic and acidic residues" evidence="5">
    <location>
        <begin position="1009"/>
        <end position="1031"/>
    </location>
</feature>
<feature type="compositionally biased region" description="Polar residues" evidence="5">
    <location>
        <begin position="1061"/>
        <end position="1074"/>
    </location>
</feature>
<feature type="compositionally biased region" description="Polar residues" evidence="5">
    <location>
        <begin position="1082"/>
        <end position="1103"/>
    </location>
</feature>
<feature type="compositionally biased region" description="Basic and acidic residues" evidence="5">
    <location>
        <begin position="1122"/>
        <end position="1135"/>
    </location>
</feature>
<feature type="compositionally biased region" description="Acidic residues" evidence="5">
    <location>
        <begin position="1136"/>
        <end position="1146"/>
    </location>
</feature>
<feature type="compositionally biased region" description="Low complexity" evidence="5">
    <location>
        <begin position="1156"/>
        <end position="1175"/>
    </location>
</feature>
<feature type="compositionally biased region" description="Pro residues" evidence="5">
    <location>
        <begin position="1226"/>
        <end position="1235"/>
    </location>
</feature>
<feature type="compositionally biased region" description="Pro residues" evidence="5">
    <location>
        <begin position="1304"/>
        <end position="1324"/>
    </location>
</feature>
<feature type="binding site" evidence="4">
    <location>
        <position position="540"/>
    </location>
    <ligand>
        <name>Ca(2+)</name>
        <dbReference type="ChEBI" id="CHEBI:29108"/>
    </ligand>
</feature>
<feature type="binding site" evidence="4">
    <location>
        <position position="542"/>
    </location>
    <ligand>
        <name>Ca(2+)</name>
        <dbReference type="ChEBI" id="CHEBI:29108"/>
    </ligand>
</feature>
<feature type="binding site" evidence="4">
    <location>
        <position position="544"/>
    </location>
    <ligand>
        <name>Ca(2+)</name>
        <dbReference type="ChEBI" id="CHEBI:29108"/>
    </ligand>
</feature>
<feature type="binding site" evidence="4">
    <location>
        <position position="546"/>
    </location>
    <ligand>
        <name>Ca(2+)</name>
        <dbReference type="ChEBI" id="CHEBI:29108"/>
    </ligand>
</feature>
<feature type="binding site" evidence="4">
    <location>
        <position position="551"/>
    </location>
    <ligand>
        <name>Ca(2+)</name>
        <dbReference type="ChEBI" id="CHEBI:29108"/>
    </ligand>
</feature>
<dbReference type="EMBL" id="CR382124">
    <property type="protein sequence ID" value="CAH00756.1"/>
    <property type="molecule type" value="Genomic_DNA"/>
</dbReference>
<dbReference type="RefSeq" id="XP_453660.1">
    <property type="nucleotide sequence ID" value="XM_453660.1"/>
</dbReference>
<dbReference type="SMR" id="Q6CQX9"/>
<dbReference type="FunCoup" id="Q6CQX9">
    <property type="interactions" value="79"/>
</dbReference>
<dbReference type="STRING" id="284590.Q6CQX9"/>
<dbReference type="PaxDb" id="284590-Q6CQX9"/>
<dbReference type="KEGG" id="kla:KLLA0_D13398g"/>
<dbReference type="eggNOG" id="KOG0998">
    <property type="taxonomic scope" value="Eukaryota"/>
</dbReference>
<dbReference type="HOGENOM" id="CLU_006042_0_0_1"/>
<dbReference type="InParanoid" id="Q6CQX9"/>
<dbReference type="OMA" id="GMPGQWG"/>
<dbReference type="Proteomes" id="UP000000598">
    <property type="component" value="Chromosome D"/>
</dbReference>
<dbReference type="GO" id="GO:0030479">
    <property type="term" value="C:actin cortical patch"/>
    <property type="evidence" value="ECO:0007669"/>
    <property type="project" value="UniProtKB-SubCell"/>
</dbReference>
<dbReference type="GO" id="GO:0010008">
    <property type="term" value="C:endosome membrane"/>
    <property type="evidence" value="ECO:0007669"/>
    <property type="project" value="UniProtKB-SubCell"/>
</dbReference>
<dbReference type="GO" id="GO:0005886">
    <property type="term" value="C:plasma membrane"/>
    <property type="evidence" value="ECO:0007669"/>
    <property type="project" value="UniProtKB-SubCell"/>
</dbReference>
<dbReference type="GO" id="GO:0003779">
    <property type="term" value="F:actin binding"/>
    <property type="evidence" value="ECO:0007669"/>
    <property type="project" value="UniProtKB-KW"/>
</dbReference>
<dbReference type="GO" id="GO:0005509">
    <property type="term" value="F:calcium ion binding"/>
    <property type="evidence" value="ECO:0007669"/>
    <property type="project" value="InterPro"/>
</dbReference>
<dbReference type="GO" id="GO:0006897">
    <property type="term" value="P:endocytosis"/>
    <property type="evidence" value="ECO:0007669"/>
    <property type="project" value="UniProtKB-KW"/>
</dbReference>
<dbReference type="GO" id="GO:0016197">
    <property type="term" value="P:endosomal transport"/>
    <property type="evidence" value="ECO:0007669"/>
    <property type="project" value="TreeGrafter"/>
</dbReference>
<dbReference type="CDD" id="cd00052">
    <property type="entry name" value="EH"/>
    <property type="match status" value="2"/>
</dbReference>
<dbReference type="FunFam" id="1.10.238.10:FF:000349">
    <property type="entry name" value="Actin cytoskeleton-regulatory complex protein PAN1"/>
    <property type="match status" value="1"/>
</dbReference>
<dbReference type="Gene3D" id="1.20.58.60">
    <property type="match status" value="1"/>
</dbReference>
<dbReference type="Gene3D" id="1.10.238.10">
    <property type="entry name" value="EF-hand"/>
    <property type="match status" value="2"/>
</dbReference>
<dbReference type="InterPro" id="IPR011992">
    <property type="entry name" value="EF-hand-dom_pair"/>
</dbReference>
<dbReference type="InterPro" id="IPR018247">
    <property type="entry name" value="EF_Hand_1_Ca_BS"/>
</dbReference>
<dbReference type="InterPro" id="IPR002048">
    <property type="entry name" value="EF_hand_dom"/>
</dbReference>
<dbReference type="InterPro" id="IPR000261">
    <property type="entry name" value="EH_dom"/>
</dbReference>
<dbReference type="PANTHER" id="PTHR11216">
    <property type="entry name" value="EH DOMAIN"/>
    <property type="match status" value="1"/>
</dbReference>
<dbReference type="Pfam" id="PF12763">
    <property type="entry name" value="EH"/>
    <property type="match status" value="2"/>
</dbReference>
<dbReference type="SMART" id="SM00054">
    <property type="entry name" value="EFh"/>
    <property type="match status" value="3"/>
</dbReference>
<dbReference type="SMART" id="SM00027">
    <property type="entry name" value="EH"/>
    <property type="match status" value="2"/>
</dbReference>
<dbReference type="SUPFAM" id="SSF47473">
    <property type="entry name" value="EF-hand"/>
    <property type="match status" value="2"/>
</dbReference>
<dbReference type="PROSITE" id="PS00018">
    <property type="entry name" value="EF_HAND_1"/>
    <property type="match status" value="1"/>
</dbReference>
<dbReference type="PROSITE" id="PS50222">
    <property type="entry name" value="EF_HAND_2"/>
    <property type="match status" value="2"/>
</dbReference>
<dbReference type="PROSITE" id="PS50031">
    <property type="entry name" value="EH"/>
    <property type="match status" value="2"/>
</dbReference>
<name>PAN1_KLULA</name>
<sequence length="1324" mass="145295">MYNQYQQQPQQPQQFGGQQQFNAQPQSTGYGNFYQQQVPTQGQQQQFSGFQTFSNAGALNQQPTGFSQQTQAQPQQPQQQQPQSQPQQGMQQPFGNQQQQMPLTQQLTGFNSMMPQTSFGQPQQQMPMNTSFNQGMSTTAVNAPTGPLQPQQTGFYSQQQPLEPLKPTATGFINSFANTGVDNTLKIPAIRLSFITTQDQAKFEKLFRSVVTPGSNTITGDQCRNILVKSGLQPHQLAKIWTLSDTNKAGVLLFPEFALAMYLVNSVLQGDSIPYELDSRTKAEVSSFVDAINFSVSNDSEVEQKPKTPFDDLTAGISMMQPQPTGYMPQLSFGSQPQQMQQQQQQQQQQPQQQSFQGLTQQPTGGYGAAPQTSFGNTSQALQPQSTGFMPQNSFNQPLNAQTTGGFSSVLNIPPPGSMPQTSFTQQAPMQTSLATGGGFLQPQATGYLPPSNFQATAPLQAQKTGFGNNDLYTSANLASKFIARKEEAITPEEKSLFYKIFETYDVEKTGNLDSATAVEIFRKSGLNRSDLEHIWNLCDTNNSGNLNKQEFALGMHLVYRRLNGEVLPNTLPPSLIPSSTKILNTVKDQLKQGVDKNNRQPTKEDGLRFRNNDDELLPSSRNRRKTIDQSKKVNENKEKIENLKNLIREKKELLASEKLRLENDSQRKQSENADLLRSIENLKSQIQALPSTSKKSPSANNAVPHDLQSRFDTLTARIPNLFKEISDVSKELVSSQLALHHLKVDHPIRGSGPNCKITELDCKNARQRLTLTAGMCTLVGRPEPNYDNLEAQAQHFNEGIETIEKDDQKNQSAINNISTWIQEISSSVQAIIHGRTPSMGLEMDKWESGIGLEPEVRDFIISWKNRRNFDNSSYNTAGYSNGIQISSSATYRNNARAPEEKDSYSSFQTPEERSAYVKEQAKKKMEEKLAALGIKKKSGSSQSSPNPPQLTQQQQPQQQQQQQQQQQQQQQQQPNYYQQPSQPAAAVNNSNLPKANDDDDEDEEDEEERRLLEQLEKLKLKKKQEKEARLAAKRQTSSSPAETKNDNGHDSWDDEPTPTNPTGNQSQAGSHHQYNPFGKSEATQQKPASGAGTPQLNNTPTGGRNPFFKQAPSQSSSFDLKAAEQQRRVQRGLDDSDGWSDDDETEKVNTTANKAVDVSSTAVPATSTASVPVAPSLPQISATTQEQSSVAVPIAPPLPLVKSESSLIPPPPPLPTSITEGSGAPPVPIAPPLPQINSDVAPAVPVAAPLLKVGGTATLAENEEPKPDDASDVLSIPESVASDEEDKFHTPGAEDVSVAPTGAIPPAPPAPPVPVIPPPPPMP</sequence>
<comment type="function">
    <text evidence="1">Component of the PAN1 actin cytoskeleton-regulatory complex required for the internalization of endosomes during actin-coupled endocytosis. The complex links the site of endocytosis to the cell membrane-associated actin cytoskeleton. Mediates uptake of external molecules and vacuolar degradation of plasma membrane proteins. Plays a role in the proper organization of the cell membrane-associated actin cytoskeleton and promotes its destabilization (By similarity).</text>
</comment>
<comment type="subunit">
    <text evidence="1">Component of the PAN1 actin cytoskeleton-regulatory complex.</text>
</comment>
<comment type="subcellular location">
    <subcellularLocation>
        <location evidence="1">Cell membrane</location>
        <topology evidence="1">Peripheral membrane protein</topology>
        <orientation evidence="1">Cytoplasmic side</orientation>
    </subcellularLocation>
    <subcellularLocation>
        <location evidence="1">Endosome membrane</location>
        <topology evidence="1">Peripheral membrane protein</topology>
        <orientation evidence="1">Cytoplasmic side</orientation>
    </subcellularLocation>
    <subcellularLocation>
        <location evidence="1">Cytoplasm</location>
        <location evidence="1">Cytoskeleton</location>
        <location evidence="1">Actin patch</location>
    </subcellularLocation>
    <text evidence="1">Cytoplasmic and cortical actin patches.</text>
</comment>
<comment type="similarity">
    <text evidence="6">Belongs to the PAN1 family.</text>
</comment>
<evidence type="ECO:0000250" key="1"/>
<evidence type="ECO:0000255" key="2"/>
<evidence type="ECO:0000255" key="3">
    <source>
        <dbReference type="PROSITE-ProRule" id="PRU00077"/>
    </source>
</evidence>
<evidence type="ECO:0000255" key="4">
    <source>
        <dbReference type="PROSITE-ProRule" id="PRU00448"/>
    </source>
</evidence>
<evidence type="ECO:0000256" key="5">
    <source>
        <dbReference type="SAM" id="MobiDB-lite"/>
    </source>
</evidence>
<evidence type="ECO:0000305" key="6"/>